<dbReference type="EC" id="3.1.3.16"/>
<dbReference type="EMBL" id="CR382132">
    <property type="protein sequence ID" value="CAG78376.1"/>
    <property type="molecule type" value="Genomic_DNA"/>
</dbReference>
<dbReference type="RefSeq" id="XP_505567.1">
    <property type="nucleotide sequence ID" value="XM_505567.1"/>
</dbReference>
<dbReference type="SMR" id="Q6C195"/>
<dbReference type="FunCoup" id="Q6C195">
    <property type="interactions" value="962"/>
</dbReference>
<dbReference type="STRING" id="284591.Q6C195"/>
<dbReference type="EnsemblFungi" id="CAG78376">
    <property type="protein sequence ID" value="CAG78376"/>
    <property type="gene ID" value="YALI0_F18194g"/>
</dbReference>
<dbReference type="KEGG" id="yli:2908669"/>
<dbReference type="VEuPathDB" id="FungiDB:YALI0_F18194g"/>
<dbReference type="HOGENOM" id="CLU_062463_0_1_1"/>
<dbReference type="InParanoid" id="Q6C195"/>
<dbReference type="OMA" id="PNCYEFG"/>
<dbReference type="OrthoDB" id="102751at4891"/>
<dbReference type="Proteomes" id="UP000001300">
    <property type="component" value="Chromosome F"/>
</dbReference>
<dbReference type="GO" id="GO:0000785">
    <property type="term" value="C:chromatin"/>
    <property type="evidence" value="ECO:0007669"/>
    <property type="project" value="EnsemblFungi"/>
</dbReference>
<dbReference type="GO" id="GO:0005847">
    <property type="term" value="C:mRNA cleavage and polyadenylation specificity factor complex"/>
    <property type="evidence" value="ECO:0000318"/>
    <property type="project" value="GO_Central"/>
</dbReference>
<dbReference type="GO" id="GO:0004725">
    <property type="term" value="F:protein tyrosine phosphatase activity"/>
    <property type="evidence" value="ECO:0007669"/>
    <property type="project" value="EnsemblFungi"/>
</dbReference>
<dbReference type="GO" id="GO:0008420">
    <property type="term" value="F:RNA polymerase II CTD heptapeptide repeat phosphatase activity"/>
    <property type="evidence" value="ECO:0000318"/>
    <property type="project" value="GO_Central"/>
</dbReference>
<dbReference type="GO" id="GO:0180007">
    <property type="term" value="F:RNA polymerase II CTD heptapeptide repeat S5 phosphatase activity"/>
    <property type="evidence" value="ECO:0007669"/>
    <property type="project" value="EnsemblFungi"/>
</dbReference>
<dbReference type="GO" id="GO:0030643">
    <property type="term" value="P:intracellular phosphate ion homeostasis"/>
    <property type="evidence" value="ECO:0007669"/>
    <property type="project" value="EnsemblFungi"/>
</dbReference>
<dbReference type="GO" id="GO:0031124">
    <property type="term" value="P:mRNA 3'-end processing"/>
    <property type="evidence" value="ECO:0007669"/>
    <property type="project" value="EnsemblFungi"/>
</dbReference>
<dbReference type="GO" id="GO:0032215">
    <property type="term" value="P:positive regulation of telomere maintenance via semi-conservative replication"/>
    <property type="evidence" value="ECO:0007669"/>
    <property type="project" value="EnsemblFungi"/>
</dbReference>
<dbReference type="GO" id="GO:0090052">
    <property type="term" value="P:regulation of pericentric heterochromatin formation"/>
    <property type="evidence" value="ECO:0007669"/>
    <property type="project" value="EnsemblFungi"/>
</dbReference>
<dbReference type="GO" id="GO:1902801">
    <property type="term" value="P:regulation of siRNA-independent facultative heterochromatin formation"/>
    <property type="evidence" value="ECO:0007669"/>
    <property type="project" value="EnsemblFungi"/>
</dbReference>
<dbReference type="GO" id="GO:0009302">
    <property type="term" value="P:sno(s)RNA transcription"/>
    <property type="evidence" value="ECO:0007669"/>
    <property type="project" value="EnsemblFungi"/>
</dbReference>
<dbReference type="GO" id="GO:0006369">
    <property type="term" value="P:termination of RNA polymerase II transcription"/>
    <property type="evidence" value="ECO:0000318"/>
    <property type="project" value="GO_Central"/>
</dbReference>
<dbReference type="GO" id="GO:0030847">
    <property type="term" value="P:termination of RNA polymerase II transcription, exosome-dependent"/>
    <property type="evidence" value="ECO:0007669"/>
    <property type="project" value="EnsemblFungi"/>
</dbReference>
<dbReference type="GO" id="GO:0030846">
    <property type="term" value="P:termination of RNA polymerase II transcription, poly(A)-coupled"/>
    <property type="evidence" value="ECO:0007669"/>
    <property type="project" value="EnsemblFungi"/>
</dbReference>
<dbReference type="GO" id="GO:0031564">
    <property type="term" value="P:transcription antitermination"/>
    <property type="evidence" value="ECO:0007669"/>
    <property type="project" value="EnsemblFungi"/>
</dbReference>
<dbReference type="GO" id="GO:0006368">
    <property type="term" value="P:transcription elongation by RNA polymerase II"/>
    <property type="evidence" value="ECO:0007669"/>
    <property type="project" value="EnsemblFungi"/>
</dbReference>
<dbReference type="GO" id="GO:0001174">
    <property type="term" value="P:transcriptional start site selection at RNA polymerase II promoter"/>
    <property type="evidence" value="ECO:0007669"/>
    <property type="project" value="EnsemblFungi"/>
</dbReference>
<dbReference type="FunFam" id="3.40.50.2300:FF:000039">
    <property type="entry name" value="RNA polymerase II subunit A C-terminal domain phosphatase"/>
    <property type="match status" value="1"/>
</dbReference>
<dbReference type="Gene3D" id="3.40.50.2300">
    <property type="match status" value="2"/>
</dbReference>
<dbReference type="InterPro" id="IPR036196">
    <property type="entry name" value="Ptyr_pPase_sf"/>
</dbReference>
<dbReference type="InterPro" id="IPR006811">
    <property type="entry name" value="RNA_pol_II_suA"/>
</dbReference>
<dbReference type="PANTHER" id="PTHR20383">
    <property type="entry name" value="RNA POLYMERASE II SUBUNIT A C-TERMINAL DOMAIN PHOSPHATASE"/>
    <property type="match status" value="1"/>
</dbReference>
<dbReference type="Pfam" id="PF04722">
    <property type="entry name" value="Ssu72"/>
    <property type="match status" value="1"/>
</dbReference>
<dbReference type="SUPFAM" id="SSF52788">
    <property type="entry name" value="Phosphotyrosine protein phosphatases I"/>
    <property type="match status" value="1"/>
</dbReference>
<name>SSU72_YARLI</name>
<sequence>MTELKMCTVCASNQNRSMEAHKVLKEAGFDVESYGTGSAVRLPGPAYDKPNIYAFGTPYDDIYNELSAQDERLYTANGLLTMLDRNRKIKTAPERWVEHKNVFDVVFTCEERCFEAVCDDLMDRGEKLQRPVHVINVDIRDNHEDSVIGAQGILKLARSLADSKDLDAQIMGIMDSWQEQHPKLPLMHAVGYF</sequence>
<organism>
    <name type="scientific">Yarrowia lipolytica (strain CLIB 122 / E 150)</name>
    <name type="common">Yeast</name>
    <name type="synonym">Candida lipolytica</name>
    <dbReference type="NCBI Taxonomy" id="284591"/>
    <lineage>
        <taxon>Eukaryota</taxon>
        <taxon>Fungi</taxon>
        <taxon>Dikarya</taxon>
        <taxon>Ascomycota</taxon>
        <taxon>Saccharomycotina</taxon>
        <taxon>Dipodascomycetes</taxon>
        <taxon>Dipodascales</taxon>
        <taxon>Dipodascales incertae sedis</taxon>
        <taxon>Yarrowia</taxon>
    </lineage>
</organism>
<feature type="chain" id="PRO_0000255613" description="RNA polymerase II subunit A C-terminal domain phosphatase SSU72">
    <location>
        <begin position="1"/>
        <end position="193"/>
    </location>
</feature>
<protein>
    <recommendedName>
        <fullName>RNA polymerase II subunit A C-terminal domain phosphatase SSU72</fullName>
        <shortName>CTD phosphatase SSU72</shortName>
        <ecNumber>3.1.3.16</ecNumber>
    </recommendedName>
    <alternativeName>
        <fullName>Suppressor of SUA7 protein 2 homolog</fullName>
    </alternativeName>
</protein>
<proteinExistence type="inferred from homology"/>
<gene>
    <name type="primary">SSU72</name>
    <name type="ordered locus">YALI0F18194g</name>
</gene>
<keyword id="KW-0378">Hydrolase</keyword>
<keyword id="KW-0507">mRNA processing</keyword>
<keyword id="KW-0539">Nucleus</keyword>
<keyword id="KW-0904">Protein phosphatase</keyword>
<keyword id="KW-1185">Reference proteome</keyword>
<evidence type="ECO:0000250" key="1"/>
<evidence type="ECO:0000305" key="2"/>
<comment type="function">
    <text evidence="1">Processively dephosphorylates Ser-5 of the heptad repeats YSPTSPS in the C-terminal domain of the largest RNA polymerase II subunit (RPB1).</text>
</comment>
<comment type="function">
    <text evidence="1">Component of the cleavage and polyadenylation factor (CPF) complex, which plays a key role in polyadenylation-dependent pre-mRNA 3'-end formation and cooperates with cleavage factors including the CFIA complex and NAB4/CFIB. SSU72 is required for 3'-end formation of snoRNAs (By similarity).</text>
</comment>
<comment type="catalytic activity">
    <reaction>
        <text>O-phospho-L-seryl-[protein] + H2O = L-seryl-[protein] + phosphate</text>
        <dbReference type="Rhea" id="RHEA:20629"/>
        <dbReference type="Rhea" id="RHEA-COMP:9863"/>
        <dbReference type="Rhea" id="RHEA-COMP:11604"/>
        <dbReference type="ChEBI" id="CHEBI:15377"/>
        <dbReference type="ChEBI" id="CHEBI:29999"/>
        <dbReference type="ChEBI" id="CHEBI:43474"/>
        <dbReference type="ChEBI" id="CHEBI:83421"/>
        <dbReference type="EC" id="3.1.3.16"/>
    </reaction>
</comment>
<comment type="catalytic activity">
    <reaction>
        <text>O-phospho-L-threonyl-[protein] + H2O = L-threonyl-[protein] + phosphate</text>
        <dbReference type="Rhea" id="RHEA:47004"/>
        <dbReference type="Rhea" id="RHEA-COMP:11060"/>
        <dbReference type="Rhea" id="RHEA-COMP:11605"/>
        <dbReference type="ChEBI" id="CHEBI:15377"/>
        <dbReference type="ChEBI" id="CHEBI:30013"/>
        <dbReference type="ChEBI" id="CHEBI:43474"/>
        <dbReference type="ChEBI" id="CHEBI:61977"/>
        <dbReference type="EC" id="3.1.3.16"/>
    </reaction>
</comment>
<comment type="subunit">
    <text evidence="1">Component of the cleavage and polyadenylation factor (CPF) complex.</text>
</comment>
<comment type="subcellular location">
    <subcellularLocation>
        <location evidence="1">Nucleus</location>
    </subcellularLocation>
</comment>
<comment type="similarity">
    <text evidence="2">Belongs to the SSU72 phosphatase family.</text>
</comment>
<accession>Q6C195</accession>
<reference key="1">
    <citation type="journal article" date="2004" name="Nature">
        <title>Genome evolution in yeasts.</title>
        <authorList>
            <person name="Dujon B."/>
            <person name="Sherman D."/>
            <person name="Fischer G."/>
            <person name="Durrens P."/>
            <person name="Casaregola S."/>
            <person name="Lafontaine I."/>
            <person name="de Montigny J."/>
            <person name="Marck C."/>
            <person name="Neuveglise C."/>
            <person name="Talla E."/>
            <person name="Goffard N."/>
            <person name="Frangeul L."/>
            <person name="Aigle M."/>
            <person name="Anthouard V."/>
            <person name="Babour A."/>
            <person name="Barbe V."/>
            <person name="Barnay S."/>
            <person name="Blanchin S."/>
            <person name="Beckerich J.-M."/>
            <person name="Beyne E."/>
            <person name="Bleykasten C."/>
            <person name="Boisrame A."/>
            <person name="Boyer J."/>
            <person name="Cattolico L."/>
            <person name="Confanioleri F."/>
            <person name="de Daruvar A."/>
            <person name="Despons L."/>
            <person name="Fabre E."/>
            <person name="Fairhead C."/>
            <person name="Ferry-Dumazet H."/>
            <person name="Groppi A."/>
            <person name="Hantraye F."/>
            <person name="Hennequin C."/>
            <person name="Jauniaux N."/>
            <person name="Joyet P."/>
            <person name="Kachouri R."/>
            <person name="Kerrest A."/>
            <person name="Koszul R."/>
            <person name="Lemaire M."/>
            <person name="Lesur I."/>
            <person name="Ma L."/>
            <person name="Muller H."/>
            <person name="Nicaud J.-M."/>
            <person name="Nikolski M."/>
            <person name="Oztas S."/>
            <person name="Ozier-Kalogeropoulos O."/>
            <person name="Pellenz S."/>
            <person name="Potier S."/>
            <person name="Richard G.-F."/>
            <person name="Straub M.-L."/>
            <person name="Suleau A."/>
            <person name="Swennen D."/>
            <person name="Tekaia F."/>
            <person name="Wesolowski-Louvel M."/>
            <person name="Westhof E."/>
            <person name="Wirth B."/>
            <person name="Zeniou-Meyer M."/>
            <person name="Zivanovic Y."/>
            <person name="Bolotin-Fukuhara M."/>
            <person name="Thierry A."/>
            <person name="Bouchier C."/>
            <person name="Caudron B."/>
            <person name="Scarpelli C."/>
            <person name="Gaillardin C."/>
            <person name="Weissenbach J."/>
            <person name="Wincker P."/>
            <person name="Souciet J.-L."/>
        </authorList>
    </citation>
    <scope>NUCLEOTIDE SEQUENCE [LARGE SCALE GENOMIC DNA]</scope>
    <source>
        <strain>CLIB 122 / E 150</strain>
    </source>
</reference>